<reference key="1">
    <citation type="submission" date="2005-09" db="EMBL/GenBank/DDBJ databases">
        <authorList>
            <person name="Mural R.J."/>
            <person name="Adams M.D."/>
            <person name="Myers E.W."/>
            <person name="Smith H.O."/>
            <person name="Venter J.C."/>
        </authorList>
    </citation>
    <scope>NUCLEOTIDE SEQUENCE [LARGE SCALE GENOMIC DNA]</scope>
</reference>
<comment type="function">
    <text evidence="1 4 5">Regulates the translocation of phosphorylated SRC to peripheral cell-matrix adhesion sites. Required for proper architecture of actin filaments. Plays a role in coupling actin fibers to cell junctions in endothelial cells and is therefore required for correct endothelial cell morphology via facilitating transcellular transmission of mechanical force resulting in endothelial cell elongation (By similarity). Required for the anchoring of radial actin fibers to CDH1 junction complexes at the cell membrane which facilitates organization of radial actin fiber structure and cellular response to contractile forces (By similarity). This contributes to maintenance of cell area, size, shape, epithelial sheet organization and trophectoderm cell properties that facilitate blastocyst zona hatching (By similarity). Inhibits the Wnt/beta-catenin signaling pathway, probably by recruiting CTNNB1 to recycling endosomes and hence preventing its translocation to the nucleus. Participates in angiogenesis. Activates the Hippo signaling pathway in response to cell contact inhibition via interaction with and ubiquitination by Crumbs complex-bound WWP1 (By similarity). Ubiquitinated AMOTL2 then interacts with LATS2 which in turn phosphorylates YAP1, excluding it from the nucleus and localizing it to the cytoplasm and tight junctions, therefore ultimately repressing YAP1-driven transcription of target genes (By similarity). Acts to inhibit WWTR1/TAZ transcriptional coactivator activity via sequestering WWTR1/TAZ in the cytoplasm and at tight junctions (By similarity). Regulates the size and protein composition of the podosome cortex and core at myofibril neuromuscular junctions (By similarity). Selectively promotes FGF-induced MAPK activation through SRC (By similarity). May play a role in the polarity, proliferation and migration of endothelial cells.</text>
</comment>
<comment type="subunit">
    <text evidence="2 4 5">Part of a complex composed of AMOTL2, MAGI1 and CDH5, within the complex AMOTL2 acts as a scaffold protein for the interaction of MAGI1 with CDH5 (By similarity). The complex is required for coupling actin fibers to cell junctions in endothelial cells (By similarity). Within the complex AMOTL2 (via its N-terminus) interacts with CDH5 (By similarity). Interacts (via N-terminus) with MAGI1 (By similarity). Interacts (via N-terminus) with ACTB; the interaction facilitates binding of cell junction complexes to actin fibers in endothelial cells (By similarity). Interacts with CDH1; the interaction may facilitate binding of radial actin fibers to cell junction complexes (By similarity). Interacts with SRC (By similarity). Interacts with YAP1; the interaction is required for ubiquitination of AMOTL2 and localization of YAP1 to tight junctions (By similarity). Interacts with WWP1; the interaction facilitates WWP1 interaction with the Crumbs complex and subsequent WWP1 translocation to the plasma membrane (By similarity). WWP1 interaction with the Crumbs complex promotes WWP1 monoubiquitination of AMOTL2 which subsequently activates the Hippo signaling pathway (By similarity). When ubiquitinated interacts with LATS2 (via UBA domain); the interaction promotes LATS2 phosphorylation of YAP1 (By similarity). Interacts (via PPXY motif) with WWTR1/TAZ (via WW domain); the interaction promotes WWTR1/TAZ localization to the cytoplasm and thereby inhibition of its transcriptional properties (By similarity). Interacts with PHLDB2; interaction may facilitate PHLDB2 localization to the myotube podosome cortex that surrounds the core (By similarity).</text>
</comment>
<comment type="subcellular location">
    <subcellularLocation>
        <location evidence="3">Recycling endosome</location>
    </subcellularLocation>
    <subcellularLocation>
        <location evidence="5">Cytoplasm</location>
    </subcellularLocation>
    <subcellularLocation>
        <location evidence="4">Cell projection</location>
        <location evidence="4">Podosome</location>
    </subcellularLocation>
    <subcellularLocation>
        <location evidence="4">Cell junction</location>
    </subcellularLocation>
</comment>
<comment type="PTM">
    <text evidence="5">Monoubiquitinated at Lys-342 and Lys-403 by Crumbs complex-bound WWP1 (By similarity). De-ubiquitinated at Lys-342 and Lys-403 by USP9X; the interaction may be promoted by cell contact inhibition (By similarity). Deubiquitination of AMOTL2 negatively regulates Hippo signaling activation (By similarity).</text>
</comment>
<comment type="PTM">
    <text evidence="3">Phosphorylation at Tyr-107 is necessary for efficient binding to SRC and synergistically functioning with SRC to activate the downstream MAPK pathway.</text>
</comment>
<comment type="similarity">
    <text evidence="8">Belongs to the angiomotin family.</text>
</comment>
<keyword id="KW-0965">Cell junction</keyword>
<keyword id="KW-0966">Cell projection</keyword>
<keyword id="KW-0175">Coiled coil</keyword>
<keyword id="KW-0963">Cytoplasm</keyword>
<keyword id="KW-0967">Endosome</keyword>
<keyword id="KW-1017">Isopeptide bond</keyword>
<keyword id="KW-0597">Phosphoprotein</keyword>
<keyword id="KW-1185">Reference proteome</keyword>
<keyword id="KW-0832">Ubl conjugation</keyword>
<keyword id="KW-0879">Wnt signaling pathway</keyword>
<evidence type="ECO:0000250" key="1"/>
<evidence type="ECO:0000250" key="2">
    <source>
        <dbReference type="UniProtKB" id="A0A8I3QA39"/>
    </source>
</evidence>
<evidence type="ECO:0000250" key="3">
    <source>
        <dbReference type="UniProtKB" id="A1YB07"/>
    </source>
</evidence>
<evidence type="ECO:0000250" key="4">
    <source>
        <dbReference type="UniProtKB" id="Q8K371"/>
    </source>
</evidence>
<evidence type="ECO:0000250" key="5">
    <source>
        <dbReference type="UniProtKB" id="Q9Y2J4"/>
    </source>
</evidence>
<evidence type="ECO:0000255" key="6"/>
<evidence type="ECO:0000256" key="7">
    <source>
        <dbReference type="SAM" id="MobiDB-lite"/>
    </source>
</evidence>
<evidence type="ECO:0000305" key="8"/>
<evidence type="ECO:0000312" key="9">
    <source>
        <dbReference type="RGD" id="70977"/>
    </source>
</evidence>
<accession>G3V735</accession>
<name>AMOL2_RAT</name>
<gene>
    <name evidence="9" type="primary">Amotl2</name>
</gene>
<feature type="chain" id="PRO_0000418838" description="Angiomotin-like protein 2">
    <location>
        <begin position="1"/>
        <end position="773"/>
    </location>
</feature>
<feature type="region of interest" description="Disordered" evidence="7">
    <location>
        <begin position="41"/>
        <end position="157"/>
    </location>
</feature>
<feature type="region of interest" description="Required for interaction with CDH5" evidence="4">
    <location>
        <begin position="101"/>
        <end position="302"/>
    </location>
</feature>
<feature type="region of interest" description="Disordered" evidence="7">
    <location>
        <begin position="169"/>
        <end position="238"/>
    </location>
</feature>
<feature type="region of interest" description="Required for interaction with CDH1" evidence="5">
    <location>
        <begin position="220"/>
        <end position="302"/>
    </location>
</feature>
<feature type="region of interest" description="Disordered" evidence="7">
    <location>
        <begin position="259"/>
        <end position="309"/>
    </location>
</feature>
<feature type="region of interest" description="Disordered" evidence="7">
    <location>
        <begin position="589"/>
        <end position="611"/>
    </location>
</feature>
<feature type="region of interest" description="Disordered" evidence="7">
    <location>
        <begin position="677"/>
        <end position="754"/>
    </location>
</feature>
<feature type="coiled-coil region" evidence="6">
    <location>
        <begin position="304"/>
        <end position="577"/>
    </location>
</feature>
<feature type="short sequence motif" description="PDZ-binding" evidence="5">
    <location>
        <begin position="770"/>
        <end position="773"/>
    </location>
</feature>
<feature type="compositionally biased region" description="Basic and acidic residues" evidence="7">
    <location>
        <begin position="80"/>
        <end position="91"/>
    </location>
</feature>
<feature type="compositionally biased region" description="Basic and acidic residues" evidence="7">
    <location>
        <begin position="100"/>
        <end position="112"/>
    </location>
</feature>
<feature type="compositionally biased region" description="Basic and acidic residues" evidence="7">
    <location>
        <begin position="141"/>
        <end position="152"/>
    </location>
</feature>
<feature type="compositionally biased region" description="Polar residues" evidence="7">
    <location>
        <begin position="177"/>
        <end position="190"/>
    </location>
</feature>
<feature type="compositionally biased region" description="Pro residues" evidence="7">
    <location>
        <begin position="196"/>
        <end position="213"/>
    </location>
</feature>
<feature type="compositionally biased region" description="Pro residues" evidence="7">
    <location>
        <begin position="701"/>
        <end position="710"/>
    </location>
</feature>
<feature type="compositionally biased region" description="Polar residues" evidence="7">
    <location>
        <begin position="719"/>
        <end position="734"/>
    </location>
</feature>
<feature type="site" description="Required for interaction with MAGI1 and ACTB" evidence="4">
    <location>
        <position position="107"/>
    </location>
</feature>
<feature type="site" description="Required for interaction with YAP1 and ubiquitination at K-342 and K-403" evidence="5">
    <location>
        <position position="213"/>
    </location>
</feature>
<feature type="modified residue" description="Phosphotyrosine; by FGFR1" evidence="3">
    <location>
        <position position="107"/>
    </location>
</feature>
<feature type="modified residue" description="Phosphoserine" evidence="5">
    <location>
        <position position="753"/>
    </location>
</feature>
<feature type="modified residue" description="Phosphoserine" evidence="4">
    <location>
        <position position="756"/>
    </location>
</feature>
<feature type="cross-link" description="Glycyl lysine isopeptide (Lys-Gly) (interchain with G-Cter in ubiquitin)" evidence="5">
    <location>
        <position position="342"/>
    </location>
</feature>
<feature type="cross-link" description="Glycyl lysine isopeptide (Lys-Gly) (interchain with G-Cter in ubiquitin)" evidence="5">
    <location>
        <position position="403"/>
    </location>
</feature>
<organism>
    <name type="scientific">Rattus norvegicus</name>
    <name type="common">Rat</name>
    <dbReference type="NCBI Taxonomy" id="10116"/>
    <lineage>
        <taxon>Eukaryota</taxon>
        <taxon>Metazoa</taxon>
        <taxon>Chordata</taxon>
        <taxon>Craniata</taxon>
        <taxon>Vertebrata</taxon>
        <taxon>Euteleostomi</taxon>
        <taxon>Mammalia</taxon>
        <taxon>Eutheria</taxon>
        <taxon>Euarchontoglires</taxon>
        <taxon>Glires</taxon>
        <taxon>Rodentia</taxon>
        <taxon>Myomorpha</taxon>
        <taxon>Muroidea</taxon>
        <taxon>Muridae</taxon>
        <taxon>Murinae</taxon>
        <taxon>Rattus</taxon>
    </lineage>
</organism>
<sequence length="773" mass="85587">MRTLEDSSGTVLHRLIQEQLRYGNLTETRTLLAIQQQALRGGAGAGGTGSPQASLEIGAPEDSQVLQQATRQEPQGQEHQGGETHLAENRLYRLCPQPSKGEELPTYEEAKAHSQYYAAQQAGSRLHGGDRDPRGASGGSRRQDEALRELRHGHVRSLSERLLQLSLERNGARVPSHMSSSHSFPQLARSQQGPQPRGPPAEGPEPRGPPPQYPHAVMAQETAAVNDPRYRPRSSPHFQHAEVRILQAQVPPVFLQQQQYQYLQQPQEHSPPLHPAALGHGPPSSFSPPALEGPPGAQATSGSAHLAQMESVLRENARLQRDNERLQRELESTSEKASCIEKLENEIQRLSEAHESLMRTSSKREALEKTMRNKMDSEMRRLQDFNRDLRERLESANRHLASKTQEAQAGSQDMVAKLLAQSYEQQQEQEKLEREMALLRGAIEDQRRRAELLEQALGNAQSRAARAEEELRKKQAYVEKVERLQQALGQLQAACEKREQLELRLRTRLEQELKALRAQQRQTGTLTGGGGSHTGSTELSALRLSEQLREKEEQILALEADMTKWEQKYLEERAMRQFAMDAAATAAAQRDTTLIRHSPQPSPSSSFNEGLLAGNHRHQEMESRLKVLHAQILEKDAVIKVLQQRSRKDPGKATQGTLRPAKSVPSIFAAAVGTQGWQGFSTSERQTDAPARQTVDRGPAEEPPATPPLPAHTKHGSRDGSTQTDGPADSTSACLASEPDSLLGCNGSQRTTSLDSIAATRVQDLSDMVEILI</sequence>
<protein>
    <recommendedName>
        <fullName evidence="8">Angiomotin-like protein 2</fullName>
    </recommendedName>
</protein>
<dbReference type="EMBL" id="CH473954">
    <property type="protein sequence ID" value="EDL77397.1"/>
    <property type="molecule type" value="Genomic_DNA"/>
</dbReference>
<dbReference type="RefSeq" id="NP_113905.1">
    <property type="nucleotide sequence ID" value="NM_031717.1"/>
</dbReference>
<dbReference type="RefSeq" id="XP_038938030.1">
    <property type="nucleotide sequence ID" value="XM_039082102.2"/>
</dbReference>
<dbReference type="SMR" id="G3V735"/>
<dbReference type="FunCoup" id="G3V735">
    <property type="interactions" value="682"/>
</dbReference>
<dbReference type="STRING" id="10116.ENSRNOP00000075540"/>
<dbReference type="GlyGen" id="G3V735">
    <property type="glycosylation" value="1 site"/>
</dbReference>
<dbReference type="PhosphoSitePlus" id="G3V735"/>
<dbReference type="PaxDb" id="10116-ENSRNOP00000011347"/>
<dbReference type="Ensembl" id="ENSRNOT00000011347.8">
    <property type="protein sequence ID" value="ENSRNOP00000011347.5"/>
    <property type="gene ID" value="ENSRNOG00000008487.8"/>
</dbReference>
<dbReference type="GeneID" id="65157"/>
<dbReference type="KEGG" id="rno:65157"/>
<dbReference type="AGR" id="RGD:70977"/>
<dbReference type="CTD" id="51421"/>
<dbReference type="RGD" id="70977">
    <property type="gene designation" value="Amotl2"/>
</dbReference>
<dbReference type="eggNOG" id="ENOG502QR7W">
    <property type="taxonomic scope" value="Eukaryota"/>
</dbReference>
<dbReference type="GeneTree" id="ENSGT00940000156577"/>
<dbReference type="HOGENOM" id="CLU_009937_2_0_1"/>
<dbReference type="InParanoid" id="G3V735"/>
<dbReference type="Reactome" id="R-RNO-2028269">
    <property type="pathway name" value="Signaling by Hippo"/>
</dbReference>
<dbReference type="PRO" id="PR:G3V735"/>
<dbReference type="Proteomes" id="UP000002494">
    <property type="component" value="Chromosome 8"/>
</dbReference>
<dbReference type="Proteomes" id="UP000234681">
    <property type="component" value="Chromosome 8"/>
</dbReference>
<dbReference type="Bgee" id="ENSRNOG00000008487">
    <property type="expression patterns" value="Expressed in lung and 20 other cell types or tissues"/>
</dbReference>
<dbReference type="ExpressionAtlas" id="G3V735">
    <property type="expression patterns" value="baseline and differential"/>
</dbReference>
<dbReference type="GO" id="GO:0016324">
    <property type="term" value="C:apical plasma membrane"/>
    <property type="evidence" value="ECO:0000266"/>
    <property type="project" value="RGD"/>
</dbReference>
<dbReference type="GO" id="GO:0005923">
    <property type="term" value="C:bicellular tight junction"/>
    <property type="evidence" value="ECO:0000266"/>
    <property type="project" value="RGD"/>
</dbReference>
<dbReference type="GO" id="GO:0030054">
    <property type="term" value="C:cell junction"/>
    <property type="evidence" value="ECO:0000250"/>
    <property type="project" value="UniProtKB"/>
</dbReference>
<dbReference type="GO" id="GO:0042995">
    <property type="term" value="C:cell projection"/>
    <property type="evidence" value="ECO:0007669"/>
    <property type="project" value="UniProtKB-KW"/>
</dbReference>
<dbReference type="GO" id="GO:0005737">
    <property type="term" value="C:cytoplasm"/>
    <property type="evidence" value="ECO:0000250"/>
    <property type="project" value="UniProtKB"/>
</dbReference>
<dbReference type="GO" id="GO:0031410">
    <property type="term" value="C:cytoplasmic vesicle"/>
    <property type="evidence" value="ECO:0000266"/>
    <property type="project" value="RGD"/>
</dbReference>
<dbReference type="GO" id="GO:0005886">
    <property type="term" value="C:plasma membrane"/>
    <property type="evidence" value="ECO:0000318"/>
    <property type="project" value="GO_Central"/>
</dbReference>
<dbReference type="GO" id="GO:0002102">
    <property type="term" value="C:podosome"/>
    <property type="evidence" value="ECO:0000250"/>
    <property type="project" value="UniProtKB"/>
</dbReference>
<dbReference type="GO" id="GO:0055037">
    <property type="term" value="C:recycling endosome"/>
    <property type="evidence" value="ECO:0007669"/>
    <property type="project" value="UniProtKB-SubCell"/>
</dbReference>
<dbReference type="GO" id="GO:0051015">
    <property type="term" value="F:actin filament binding"/>
    <property type="evidence" value="ECO:0000250"/>
    <property type="project" value="UniProtKB"/>
</dbReference>
<dbReference type="GO" id="GO:0042802">
    <property type="term" value="F:identical protein binding"/>
    <property type="evidence" value="ECO:0000266"/>
    <property type="project" value="RGD"/>
</dbReference>
<dbReference type="GO" id="GO:0044877">
    <property type="term" value="F:protein-containing complex binding"/>
    <property type="evidence" value="ECO:0000266"/>
    <property type="project" value="RGD"/>
</dbReference>
<dbReference type="GO" id="GO:0030036">
    <property type="term" value="P:actin cytoskeleton organization"/>
    <property type="evidence" value="ECO:0000318"/>
    <property type="project" value="GO_Central"/>
</dbReference>
<dbReference type="GO" id="GO:0001525">
    <property type="term" value="P:angiogenesis"/>
    <property type="evidence" value="ECO:0000318"/>
    <property type="project" value="GO_Central"/>
</dbReference>
<dbReference type="GO" id="GO:0001886">
    <property type="term" value="P:endothelial cell morphogenesis"/>
    <property type="evidence" value="ECO:0000250"/>
    <property type="project" value="UniProtKB"/>
</dbReference>
<dbReference type="GO" id="GO:0003365">
    <property type="term" value="P:establishment of cell polarity involved in ameboidal cell migration"/>
    <property type="evidence" value="ECO:0000318"/>
    <property type="project" value="GO_Central"/>
</dbReference>
<dbReference type="GO" id="GO:0035329">
    <property type="term" value="P:hippo signaling"/>
    <property type="evidence" value="ECO:0000266"/>
    <property type="project" value="RGD"/>
</dbReference>
<dbReference type="GO" id="GO:0000122">
    <property type="term" value="P:negative regulation of transcription by RNA polymerase II"/>
    <property type="evidence" value="ECO:0000250"/>
    <property type="project" value="UniProtKB"/>
</dbReference>
<dbReference type="GO" id="GO:1903829">
    <property type="term" value="P:positive regulation of protein localization"/>
    <property type="evidence" value="ECO:0000250"/>
    <property type="project" value="UniProtKB"/>
</dbReference>
<dbReference type="GO" id="GO:0030334">
    <property type="term" value="P:regulation of cell migration"/>
    <property type="evidence" value="ECO:0000318"/>
    <property type="project" value="GO_Central"/>
</dbReference>
<dbReference type="GO" id="GO:0016055">
    <property type="term" value="P:Wnt signaling pathway"/>
    <property type="evidence" value="ECO:0007669"/>
    <property type="project" value="UniProtKB-KW"/>
</dbReference>
<dbReference type="InterPro" id="IPR009114">
    <property type="entry name" value="Angiomotin"/>
</dbReference>
<dbReference type="InterPro" id="IPR051747">
    <property type="entry name" value="Angiomotin-like"/>
</dbReference>
<dbReference type="InterPro" id="IPR024646">
    <property type="entry name" value="Angiomotin_C"/>
</dbReference>
<dbReference type="PANTHER" id="PTHR14826">
    <property type="entry name" value="ANGIOMOTIN"/>
    <property type="match status" value="1"/>
</dbReference>
<dbReference type="PANTHER" id="PTHR14826:SF3">
    <property type="entry name" value="ANGIOMOTIN-LIKE PROTEIN 2"/>
    <property type="match status" value="1"/>
</dbReference>
<dbReference type="Pfam" id="PF12240">
    <property type="entry name" value="Angiomotin_C"/>
    <property type="match status" value="1"/>
</dbReference>
<dbReference type="PRINTS" id="PR01807">
    <property type="entry name" value="ANGIOMOTIN"/>
</dbReference>
<proteinExistence type="inferred from homology"/>